<gene>
    <name evidence="1" type="primary">pgi</name>
    <name type="ordered locus">OEOE_0636</name>
</gene>
<reference key="1">
    <citation type="journal article" date="2006" name="Proc. Natl. Acad. Sci. U.S.A.">
        <title>Comparative genomics of the lactic acid bacteria.</title>
        <authorList>
            <person name="Makarova K.S."/>
            <person name="Slesarev A."/>
            <person name="Wolf Y.I."/>
            <person name="Sorokin A."/>
            <person name="Mirkin B."/>
            <person name="Koonin E.V."/>
            <person name="Pavlov A."/>
            <person name="Pavlova N."/>
            <person name="Karamychev V."/>
            <person name="Polouchine N."/>
            <person name="Shakhova V."/>
            <person name="Grigoriev I."/>
            <person name="Lou Y."/>
            <person name="Rohksar D."/>
            <person name="Lucas S."/>
            <person name="Huang K."/>
            <person name="Goodstein D.M."/>
            <person name="Hawkins T."/>
            <person name="Plengvidhya V."/>
            <person name="Welker D."/>
            <person name="Hughes J."/>
            <person name="Goh Y."/>
            <person name="Benson A."/>
            <person name="Baldwin K."/>
            <person name="Lee J.-H."/>
            <person name="Diaz-Muniz I."/>
            <person name="Dosti B."/>
            <person name="Smeianov V."/>
            <person name="Wechter W."/>
            <person name="Barabote R."/>
            <person name="Lorca G."/>
            <person name="Altermann E."/>
            <person name="Barrangou R."/>
            <person name="Ganesan B."/>
            <person name="Xie Y."/>
            <person name="Rawsthorne H."/>
            <person name="Tamir D."/>
            <person name="Parker C."/>
            <person name="Breidt F."/>
            <person name="Broadbent J.R."/>
            <person name="Hutkins R."/>
            <person name="O'Sullivan D."/>
            <person name="Steele J."/>
            <person name="Unlu G."/>
            <person name="Saier M.H. Jr."/>
            <person name="Klaenhammer T."/>
            <person name="Richardson P."/>
            <person name="Kozyavkin S."/>
            <person name="Weimer B.C."/>
            <person name="Mills D.A."/>
        </authorList>
    </citation>
    <scope>NUCLEOTIDE SEQUENCE [LARGE SCALE GENOMIC DNA]</scope>
    <source>
        <strain>ATCC BAA-331 / PSU-1</strain>
    </source>
</reference>
<keyword id="KW-0963">Cytoplasm</keyword>
<keyword id="KW-0312">Gluconeogenesis</keyword>
<keyword id="KW-0324">Glycolysis</keyword>
<keyword id="KW-0413">Isomerase</keyword>
<keyword id="KW-1185">Reference proteome</keyword>
<feature type="chain" id="PRO_1000081244" description="Glucose-6-phosphate isomerase">
    <location>
        <begin position="1"/>
        <end position="438"/>
    </location>
</feature>
<feature type="active site" description="Proton donor" evidence="1">
    <location>
        <position position="289"/>
    </location>
</feature>
<feature type="active site" evidence="1">
    <location>
        <position position="310"/>
    </location>
</feature>
<feature type="active site" evidence="1">
    <location>
        <position position="424"/>
    </location>
</feature>
<sequence length="438" mass="48668">MKVTFKKDYLKDFVADSEVELLKPTAGFVRDTLLARTGVGNEMEDWLTLPSDYDKEEFARILKVADKIKSDSKVLVVIGIGGSYLGARAVIEFLKSEFHNEKANKEGLPEVYFVGTSASGRYIDDVIDLIGNRDFSINIISKSGTTTEPAIAFRTFKSLIEKKYGKEEASKRIFATTDAHKGALLNVAKENGYERFVVPDGIGGRYSVLSAVGLLPIAVAGINIQKLMDGAKAAQEEFAKDEDILNKPSILYAIYRNILYRKGFDVETIVGYEPQFRFLFEWWKQLMAESEGKDNKGIYPTSAIFSTDLHSIGQYIQDGKKILFETILDITKPISDRVVPSADDNTDNLDYILNKPMKEVNEAALTATAQAHTSAGVPNILLQLDDLDEFNLGNLIYFFEAAVAVSGYLDGINPFDQPGVEIYKTNMFKILGKPGYTD</sequence>
<comment type="function">
    <text evidence="1">Catalyzes the reversible isomerization of glucose-6-phosphate to fructose-6-phosphate.</text>
</comment>
<comment type="catalytic activity">
    <reaction evidence="1">
        <text>alpha-D-glucose 6-phosphate = beta-D-fructose 6-phosphate</text>
        <dbReference type="Rhea" id="RHEA:11816"/>
        <dbReference type="ChEBI" id="CHEBI:57634"/>
        <dbReference type="ChEBI" id="CHEBI:58225"/>
        <dbReference type="EC" id="5.3.1.9"/>
    </reaction>
</comment>
<comment type="pathway">
    <text evidence="1">Carbohydrate biosynthesis; gluconeogenesis.</text>
</comment>
<comment type="pathway">
    <text evidence="1">Carbohydrate degradation; glycolysis; D-glyceraldehyde 3-phosphate and glycerone phosphate from D-glucose: step 2/4.</text>
</comment>
<comment type="subcellular location">
    <subcellularLocation>
        <location evidence="1">Cytoplasm</location>
    </subcellularLocation>
</comment>
<comment type="similarity">
    <text evidence="1">Belongs to the GPI family.</text>
</comment>
<name>G6PI_OENOB</name>
<protein>
    <recommendedName>
        <fullName evidence="1">Glucose-6-phosphate isomerase</fullName>
        <shortName evidence="1">GPI</shortName>
        <ecNumber evidence="1">5.3.1.9</ecNumber>
    </recommendedName>
    <alternativeName>
        <fullName evidence="1">Phosphoglucose isomerase</fullName>
        <shortName evidence="1">PGI</shortName>
    </alternativeName>
    <alternativeName>
        <fullName evidence="1">Phosphohexose isomerase</fullName>
        <shortName evidence="1">PHI</shortName>
    </alternativeName>
</protein>
<evidence type="ECO:0000255" key="1">
    <source>
        <dbReference type="HAMAP-Rule" id="MF_00473"/>
    </source>
</evidence>
<dbReference type="EC" id="5.3.1.9" evidence="1"/>
<dbReference type="EMBL" id="CP000411">
    <property type="protein sequence ID" value="ABJ56578.1"/>
    <property type="molecule type" value="Genomic_DNA"/>
</dbReference>
<dbReference type="RefSeq" id="WP_011677529.1">
    <property type="nucleotide sequence ID" value="NC_008528.1"/>
</dbReference>
<dbReference type="SMR" id="Q04G44"/>
<dbReference type="STRING" id="203123.OEOE_0636"/>
<dbReference type="KEGG" id="ooe:OEOE_0636"/>
<dbReference type="PATRIC" id="fig|203123.7.peg.647"/>
<dbReference type="eggNOG" id="COG0166">
    <property type="taxonomic scope" value="Bacteria"/>
</dbReference>
<dbReference type="HOGENOM" id="CLU_037303_0_1_9"/>
<dbReference type="UniPathway" id="UPA00109">
    <property type="reaction ID" value="UER00181"/>
</dbReference>
<dbReference type="UniPathway" id="UPA00138"/>
<dbReference type="Proteomes" id="UP000000774">
    <property type="component" value="Chromosome"/>
</dbReference>
<dbReference type="GO" id="GO:0005829">
    <property type="term" value="C:cytosol"/>
    <property type="evidence" value="ECO:0007669"/>
    <property type="project" value="TreeGrafter"/>
</dbReference>
<dbReference type="GO" id="GO:0097367">
    <property type="term" value="F:carbohydrate derivative binding"/>
    <property type="evidence" value="ECO:0007669"/>
    <property type="project" value="InterPro"/>
</dbReference>
<dbReference type="GO" id="GO:0004347">
    <property type="term" value="F:glucose-6-phosphate isomerase activity"/>
    <property type="evidence" value="ECO:0007669"/>
    <property type="project" value="UniProtKB-UniRule"/>
</dbReference>
<dbReference type="GO" id="GO:0048029">
    <property type="term" value="F:monosaccharide binding"/>
    <property type="evidence" value="ECO:0007669"/>
    <property type="project" value="TreeGrafter"/>
</dbReference>
<dbReference type="GO" id="GO:0006094">
    <property type="term" value="P:gluconeogenesis"/>
    <property type="evidence" value="ECO:0007669"/>
    <property type="project" value="UniProtKB-UniRule"/>
</dbReference>
<dbReference type="GO" id="GO:0051156">
    <property type="term" value="P:glucose 6-phosphate metabolic process"/>
    <property type="evidence" value="ECO:0007669"/>
    <property type="project" value="TreeGrafter"/>
</dbReference>
<dbReference type="GO" id="GO:0006096">
    <property type="term" value="P:glycolytic process"/>
    <property type="evidence" value="ECO:0007669"/>
    <property type="project" value="UniProtKB-UniRule"/>
</dbReference>
<dbReference type="CDD" id="cd05015">
    <property type="entry name" value="SIS_PGI_1"/>
    <property type="match status" value="1"/>
</dbReference>
<dbReference type="CDD" id="cd05016">
    <property type="entry name" value="SIS_PGI_2"/>
    <property type="match status" value="1"/>
</dbReference>
<dbReference type="FunFam" id="3.40.50.10490:FF:000016">
    <property type="entry name" value="Glucose-6-phosphate isomerase"/>
    <property type="match status" value="1"/>
</dbReference>
<dbReference type="Gene3D" id="3.40.50.10490">
    <property type="entry name" value="Glucose-6-phosphate isomerase like protein, domain 1"/>
    <property type="match status" value="2"/>
</dbReference>
<dbReference type="HAMAP" id="MF_00473">
    <property type="entry name" value="G6P_isomerase"/>
    <property type="match status" value="1"/>
</dbReference>
<dbReference type="InterPro" id="IPR001672">
    <property type="entry name" value="G6P_Isomerase"/>
</dbReference>
<dbReference type="InterPro" id="IPR018189">
    <property type="entry name" value="Phosphoglucose_isomerase_CS"/>
</dbReference>
<dbReference type="InterPro" id="IPR046348">
    <property type="entry name" value="SIS_dom_sf"/>
</dbReference>
<dbReference type="InterPro" id="IPR035476">
    <property type="entry name" value="SIS_PGI_1"/>
</dbReference>
<dbReference type="InterPro" id="IPR035482">
    <property type="entry name" value="SIS_PGI_2"/>
</dbReference>
<dbReference type="NCBIfam" id="NF010697">
    <property type="entry name" value="PRK14097.1"/>
    <property type="match status" value="1"/>
</dbReference>
<dbReference type="PANTHER" id="PTHR11469">
    <property type="entry name" value="GLUCOSE-6-PHOSPHATE ISOMERASE"/>
    <property type="match status" value="1"/>
</dbReference>
<dbReference type="PANTHER" id="PTHR11469:SF1">
    <property type="entry name" value="GLUCOSE-6-PHOSPHATE ISOMERASE"/>
    <property type="match status" value="1"/>
</dbReference>
<dbReference type="Pfam" id="PF00342">
    <property type="entry name" value="PGI"/>
    <property type="match status" value="1"/>
</dbReference>
<dbReference type="PRINTS" id="PR00662">
    <property type="entry name" value="G6PISOMERASE"/>
</dbReference>
<dbReference type="SUPFAM" id="SSF53697">
    <property type="entry name" value="SIS domain"/>
    <property type="match status" value="1"/>
</dbReference>
<dbReference type="PROSITE" id="PS00765">
    <property type="entry name" value="P_GLUCOSE_ISOMERASE_1"/>
    <property type="match status" value="1"/>
</dbReference>
<dbReference type="PROSITE" id="PS51463">
    <property type="entry name" value="P_GLUCOSE_ISOMERASE_3"/>
    <property type="match status" value="1"/>
</dbReference>
<accession>Q04G44</accession>
<proteinExistence type="inferred from homology"/>
<organism>
    <name type="scientific">Oenococcus oeni (strain ATCC BAA-331 / PSU-1)</name>
    <dbReference type="NCBI Taxonomy" id="203123"/>
    <lineage>
        <taxon>Bacteria</taxon>
        <taxon>Bacillati</taxon>
        <taxon>Bacillota</taxon>
        <taxon>Bacilli</taxon>
        <taxon>Lactobacillales</taxon>
        <taxon>Lactobacillaceae</taxon>
        <taxon>Oenococcus</taxon>
    </lineage>
</organism>